<gene>
    <name type="primary">its8</name>
    <name type="synonym">mcd4</name>
    <name type="ORF">SPBC839.08c</name>
</gene>
<sequence length="935" mass="106404">MFGRLLLLGILFHVVFLKSIFDIYFVTPLIHGMKQYSAGEAPAKRLFLIVGDGLRPDKLLQPHSEKVIGEEQTYAAPFLRSIIQNNGTFGVSHTRVPTESRPGHVALIAGFYEDVSAVTKGWKKNPVNFDSVFNQSRHTYSFGSEDILPMFSEGASDPSRVDTFMYSSELEDFSSNGIVLDEWVFDRLDELLAQSLEDKELWDMLHRDKIVFFLHLLGIDTIGHNKHPDSVEYVENIQYIDGKIQELVDKMNNYYNNDGASSWVFTADHGMSDFGSHGDGNLDNTRTPIIAWGAGIQSPTHEKNYGHDEYSLPWNLTEIKRIDIQQADIAALMSYLVGLNFPVNSVGQIPLDYLDCSSRRKAEVALMNALEIGEQYNLKSASKDQTSIFFRPYSPLRNYTEVQASFYNSVIADIESGEYEIAIEHCFHFSQTVLSGLRYLQRYDWLLLRSIVFFGYLSWIGYVICFVFSLNIEPSSKIVKPVSVVKRVAFNIPFLLICIFFYIQSSPPFYYGYALFPTIFLQLIHSIFPNTKLGFKNFLTVAKQKHGFSLLKILFISLCILCLLQFIVYSYFHREGFSVILMGLAAWPWLLHADYAFSHKTISVSWSVLTSLLCFFTILPVNKKESLLFIFAGGFAMSVAGVFYILYRRNQAFQYSSTVTNKQLVLQVLIIMATVPVTLKIADSLQRNIAIPPILRLVAFGLFITSYIIPSHHIRSCKHYFLDRLAILFLTFSPTMCMLSISFEALFYVVLFITLGLWMELETELQKYTEQLHPEYSRKKDAKFHLSLSHIRISLFFYIFINVAFFGTGNVASLSTFALDSVKRFIPVFNPVTQGALLMYTILVPFIALSAAFGIMNKRLGGIQQVTFFLAVGMADIVTINFFYLVKDEGSWKDIGVSISHFCISNFLILFITALEHASAILCKNITYTIHEKVN</sequence>
<evidence type="ECO:0000255" key="1"/>
<evidence type="ECO:0000269" key="2">
    <source>
    </source>
</evidence>
<evidence type="ECO:0000269" key="3">
    <source>
    </source>
</evidence>
<evidence type="ECO:0000305" key="4"/>
<proteinExistence type="evidence at protein level"/>
<reference key="1">
    <citation type="journal article" date="2002" name="Nature">
        <title>The genome sequence of Schizosaccharomyces pombe.</title>
        <authorList>
            <person name="Wood V."/>
            <person name="Gwilliam R."/>
            <person name="Rajandream M.A."/>
            <person name="Lyne M.H."/>
            <person name="Lyne R."/>
            <person name="Stewart A."/>
            <person name="Sgouros J.G."/>
            <person name="Peat N."/>
            <person name="Hayles J."/>
            <person name="Baker S.G."/>
            <person name="Basham D."/>
            <person name="Bowman S."/>
            <person name="Brooks K."/>
            <person name="Brown D."/>
            <person name="Brown S."/>
            <person name="Chillingworth T."/>
            <person name="Churcher C.M."/>
            <person name="Collins M."/>
            <person name="Connor R."/>
            <person name="Cronin A."/>
            <person name="Davis P."/>
            <person name="Feltwell T."/>
            <person name="Fraser A."/>
            <person name="Gentles S."/>
            <person name="Goble A."/>
            <person name="Hamlin N."/>
            <person name="Harris D.E."/>
            <person name="Hidalgo J."/>
            <person name="Hodgson G."/>
            <person name="Holroyd S."/>
            <person name="Hornsby T."/>
            <person name="Howarth S."/>
            <person name="Huckle E.J."/>
            <person name="Hunt S."/>
            <person name="Jagels K."/>
            <person name="James K.D."/>
            <person name="Jones L."/>
            <person name="Jones M."/>
            <person name="Leather S."/>
            <person name="McDonald S."/>
            <person name="McLean J."/>
            <person name="Mooney P."/>
            <person name="Moule S."/>
            <person name="Mungall K.L."/>
            <person name="Murphy L.D."/>
            <person name="Niblett D."/>
            <person name="Odell C."/>
            <person name="Oliver K."/>
            <person name="O'Neil S."/>
            <person name="Pearson D."/>
            <person name="Quail M.A."/>
            <person name="Rabbinowitsch E."/>
            <person name="Rutherford K.M."/>
            <person name="Rutter S."/>
            <person name="Saunders D."/>
            <person name="Seeger K."/>
            <person name="Sharp S."/>
            <person name="Skelton J."/>
            <person name="Simmonds M.N."/>
            <person name="Squares R."/>
            <person name="Squares S."/>
            <person name="Stevens K."/>
            <person name="Taylor K."/>
            <person name="Taylor R.G."/>
            <person name="Tivey A."/>
            <person name="Walsh S.V."/>
            <person name="Warren T."/>
            <person name="Whitehead S."/>
            <person name="Woodward J.R."/>
            <person name="Volckaert G."/>
            <person name="Aert R."/>
            <person name="Robben J."/>
            <person name="Grymonprez B."/>
            <person name="Weltjens I."/>
            <person name="Vanstreels E."/>
            <person name="Rieger M."/>
            <person name="Schaefer M."/>
            <person name="Mueller-Auer S."/>
            <person name="Gabel C."/>
            <person name="Fuchs M."/>
            <person name="Duesterhoeft A."/>
            <person name="Fritzc C."/>
            <person name="Holzer E."/>
            <person name="Moestl D."/>
            <person name="Hilbert H."/>
            <person name="Borzym K."/>
            <person name="Langer I."/>
            <person name="Beck A."/>
            <person name="Lehrach H."/>
            <person name="Reinhardt R."/>
            <person name="Pohl T.M."/>
            <person name="Eger P."/>
            <person name="Zimmermann W."/>
            <person name="Wedler H."/>
            <person name="Wambutt R."/>
            <person name="Purnelle B."/>
            <person name="Goffeau A."/>
            <person name="Cadieu E."/>
            <person name="Dreano S."/>
            <person name="Gloux S."/>
            <person name="Lelaure V."/>
            <person name="Mottier S."/>
            <person name="Galibert F."/>
            <person name="Aves S.J."/>
            <person name="Xiang Z."/>
            <person name="Hunt C."/>
            <person name="Moore K."/>
            <person name="Hurst S.M."/>
            <person name="Lucas M."/>
            <person name="Rochet M."/>
            <person name="Gaillardin C."/>
            <person name="Tallada V.A."/>
            <person name="Garzon A."/>
            <person name="Thode G."/>
            <person name="Daga R.R."/>
            <person name="Cruzado L."/>
            <person name="Jimenez J."/>
            <person name="Sanchez M."/>
            <person name="del Rey F."/>
            <person name="Benito J."/>
            <person name="Dominguez A."/>
            <person name="Revuelta J.L."/>
            <person name="Moreno S."/>
            <person name="Armstrong J."/>
            <person name="Forsburg S.L."/>
            <person name="Cerutti L."/>
            <person name="Lowe T."/>
            <person name="McCombie W.R."/>
            <person name="Paulsen I."/>
            <person name="Potashkin J."/>
            <person name="Shpakovski G.V."/>
            <person name="Ussery D."/>
            <person name="Barrell B.G."/>
            <person name="Nurse P."/>
        </authorList>
    </citation>
    <scope>NUCLEOTIDE SEQUENCE [LARGE SCALE GENOMIC DNA]</scope>
    <source>
        <strain>972 / ATCC 24843</strain>
    </source>
</reference>
<reference key="2">
    <citation type="journal article" date="2000" name="Genes Cells">
        <title>Large-scale screening of intracellular protein localization in living fission yeast cells by the use of a GFP-fusion genomic DNA library.</title>
        <authorList>
            <person name="Ding D.-Q."/>
            <person name="Tomita Y."/>
            <person name="Yamamoto A."/>
            <person name="Chikashige Y."/>
            <person name="Haraguchi T."/>
            <person name="Hiraoka Y."/>
        </authorList>
    </citation>
    <scope>NUCLEOTIDE SEQUENCE [LARGE SCALE GENOMIC DNA] OF 206-384</scope>
    <scope>SUBCELLULAR LOCATION</scope>
    <source>
        <strain>ATCC 38364 / 968</strain>
    </source>
</reference>
<reference key="3">
    <citation type="journal article" date="2001" name="J. Biol. Chem.">
        <title>Its8, a fission yeast homolog of Mcd4 and Pig-n, is involved in GPI anchor synthesis and shares an essential function with calcineurin in cytokinesis.</title>
        <authorList>
            <person name="Yada T."/>
            <person name="Sugiura R."/>
            <person name="Kita A."/>
            <person name="Itoh Y."/>
            <person name="Lu Y."/>
            <person name="Hong Y."/>
            <person name="Kinoshita T."/>
            <person name="Shuntoh H."/>
            <person name="Kuno T."/>
        </authorList>
    </citation>
    <scope>FUNCTION</scope>
    <scope>SUBCELLULAR LOCATION</scope>
    <scope>MUTAGENESIS OF PRO-288</scope>
</reference>
<keyword id="KW-0961">Cell wall biogenesis/degradation</keyword>
<keyword id="KW-0256">Endoplasmic reticulum</keyword>
<keyword id="KW-0325">Glycoprotein</keyword>
<keyword id="KW-0337">GPI-anchor biosynthesis</keyword>
<keyword id="KW-0472">Membrane</keyword>
<keyword id="KW-1185">Reference proteome</keyword>
<keyword id="KW-0808">Transferase</keyword>
<keyword id="KW-0812">Transmembrane</keyword>
<keyword id="KW-1133">Transmembrane helix</keyword>
<accession>Q8WZK2</accession>
<accession>Q9US89</accession>
<protein>
    <recommendedName>
        <fullName>GPI ethanolamine phosphate transferase 1</fullName>
        <ecNumber>2.-.-.-</ecNumber>
    </recommendedName>
    <alternativeName>
        <fullName>Immunosuppresant and temperature-sensitive protein 8</fullName>
    </alternativeName>
</protein>
<name>MCD4_SCHPO</name>
<dbReference type="EC" id="2.-.-.-"/>
<dbReference type="EMBL" id="CU329671">
    <property type="protein sequence ID" value="CAB46701.1"/>
    <property type="molecule type" value="Genomic_DNA"/>
</dbReference>
<dbReference type="EMBL" id="AB027957">
    <property type="protein sequence ID" value="BAA87261.1"/>
    <property type="molecule type" value="Genomic_DNA"/>
</dbReference>
<dbReference type="PIR" id="T40715">
    <property type="entry name" value="T40715"/>
</dbReference>
<dbReference type="RefSeq" id="NP_595248.1">
    <property type="nucleotide sequence ID" value="NM_001021154.2"/>
</dbReference>
<dbReference type="SMR" id="Q8WZK2"/>
<dbReference type="BioGRID" id="277713">
    <property type="interactions" value="6"/>
</dbReference>
<dbReference type="FunCoup" id="Q8WZK2">
    <property type="interactions" value="207"/>
</dbReference>
<dbReference type="STRING" id="284812.Q8WZK2"/>
<dbReference type="GlyCosmos" id="Q8WZK2">
    <property type="glycosylation" value="5 sites, No reported glycans"/>
</dbReference>
<dbReference type="iPTMnet" id="Q8WZK2"/>
<dbReference type="PaxDb" id="4896-SPBC839.08c.1"/>
<dbReference type="EnsemblFungi" id="SPBC839.08c.1">
    <property type="protein sequence ID" value="SPBC839.08c.1:pep"/>
    <property type="gene ID" value="SPBC839.08c"/>
</dbReference>
<dbReference type="GeneID" id="2541199"/>
<dbReference type="KEGG" id="spo:2541199"/>
<dbReference type="PomBase" id="SPBC839.08c">
    <property type="gene designation" value="its8"/>
</dbReference>
<dbReference type="VEuPathDB" id="FungiDB:SPBC839.08c"/>
<dbReference type="eggNOG" id="KOG2124">
    <property type="taxonomic scope" value="Eukaryota"/>
</dbReference>
<dbReference type="HOGENOM" id="CLU_007676_0_0_1"/>
<dbReference type="InParanoid" id="Q8WZK2"/>
<dbReference type="OMA" id="QSYFHRE"/>
<dbReference type="PhylomeDB" id="Q8WZK2"/>
<dbReference type="Reactome" id="R-SPO-162710">
    <property type="pathway name" value="Synthesis of glycosylphosphatidylinositol (GPI)"/>
</dbReference>
<dbReference type="UniPathway" id="UPA00196"/>
<dbReference type="PRO" id="PR:Q8WZK2"/>
<dbReference type="Proteomes" id="UP000002485">
    <property type="component" value="Chromosome II"/>
</dbReference>
<dbReference type="GO" id="GO:0005789">
    <property type="term" value="C:endoplasmic reticulum membrane"/>
    <property type="evidence" value="ECO:0000314"/>
    <property type="project" value="PomBase"/>
</dbReference>
<dbReference type="GO" id="GO:0051377">
    <property type="term" value="F:mannose-ethanolamine phosphotransferase activity"/>
    <property type="evidence" value="ECO:0000318"/>
    <property type="project" value="GO_Central"/>
</dbReference>
<dbReference type="GO" id="GO:0071555">
    <property type="term" value="P:cell wall organization"/>
    <property type="evidence" value="ECO:0007669"/>
    <property type="project" value="UniProtKB-KW"/>
</dbReference>
<dbReference type="GO" id="GO:0006506">
    <property type="term" value="P:GPI anchor biosynthetic process"/>
    <property type="evidence" value="ECO:0000315"/>
    <property type="project" value="PomBase"/>
</dbReference>
<dbReference type="CDD" id="cd16020">
    <property type="entry name" value="GPI_EPT_1"/>
    <property type="match status" value="1"/>
</dbReference>
<dbReference type="FunFam" id="3.40.720.10:FF:000015">
    <property type="entry name" value="GPI ethanolamine phosphate transferase 1"/>
    <property type="match status" value="1"/>
</dbReference>
<dbReference type="Gene3D" id="3.40.720.10">
    <property type="entry name" value="Alkaline Phosphatase, subunit A"/>
    <property type="match status" value="1"/>
</dbReference>
<dbReference type="InterPro" id="IPR017850">
    <property type="entry name" value="Alkaline_phosphatase_core_sf"/>
</dbReference>
<dbReference type="InterPro" id="IPR007070">
    <property type="entry name" value="GPI_EtnP_transferase_1"/>
</dbReference>
<dbReference type="InterPro" id="IPR017852">
    <property type="entry name" value="GPI_EtnP_transferase_1_C"/>
</dbReference>
<dbReference type="InterPro" id="IPR002591">
    <property type="entry name" value="Phosphodiest/P_Trfase"/>
</dbReference>
<dbReference type="InterPro" id="IPR037671">
    <property type="entry name" value="PIGN_N"/>
</dbReference>
<dbReference type="PANTHER" id="PTHR12250:SF0">
    <property type="entry name" value="GPI ETHANOLAMINE PHOSPHATE TRANSFERASE 1"/>
    <property type="match status" value="1"/>
</dbReference>
<dbReference type="PANTHER" id="PTHR12250">
    <property type="entry name" value="PHOSPHATIDYLINOSITOL GLYCAN, CLASS N"/>
    <property type="match status" value="1"/>
</dbReference>
<dbReference type="Pfam" id="PF01663">
    <property type="entry name" value="Phosphodiest"/>
    <property type="match status" value="1"/>
</dbReference>
<dbReference type="Pfam" id="PF04987">
    <property type="entry name" value="PigN"/>
    <property type="match status" value="1"/>
</dbReference>
<dbReference type="SUPFAM" id="SSF53649">
    <property type="entry name" value="Alkaline phosphatase-like"/>
    <property type="match status" value="1"/>
</dbReference>
<comment type="function">
    <text evidence="3">Ethanolamine phosphate transferase involved in glycosylphosphatidylinositol-anchor biosynthesis. Transfers ethanolamine phosphate to the first alpha-1,4-linked mannose of the glycosylphosphatidylinositol precursor of GPI-anchor.</text>
</comment>
<comment type="pathway">
    <text>Glycolipid biosynthesis; glycosylphosphatidylinositol-anchor biosynthesis.</text>
</comment>
<comment type="subcellular location">
    <subcellularLocation>
        <location evidence="2 3">Endoplasmic reticulum membrane</location>
        <topology evidence="2 3">Multi-pass membrane protein</topology>
    </subcellularLocation>
</comment>
<comment type="miscellaneous">
    <text>Target of the inhibitor of GPI biosynthesis YW3548/BE49385A.</text>
</comment>
<comment type="similarity">
    <text evidence="4">Belongs to the PIGG/PIGN/PIGO family. PIGN subfamily.</text>
</comment>
<organism>
    <name type="scientific">Schizosaccharomyces pombe (strain 972 / ATCC 24843)</name>
    <name type="common">Fission yeast</name>
    <dbReference type="NCBI Taxonomy" id="284812"/>
    <lineage>
        <taxon>Eukaryota</taxon>
        <taxon>Fungi</taxon>
        <taxon>Dikarya</taxon>
        <taxon>Ascomycota</taxon>
        <taxon>Taphrinomycotina</taxon>
        <taxon>Schizosaccharomycetes</taxon>
        <taxon>Schizosaccharomycetales</taxon>
        <taxon>Schizosaccharomycetaceae</taxon>
        <taxon>Schizosaccharomyces</taxon>
    </lineage>
</organism>
<feature type="chain" id="PRO_0000024106" description="GPI ethanolamine phosphate transferase 1">
    <location>
        <begin position="1"/>
        <end position="935"/>
    </location>
</feature>
<feature type="topological domain" description="Cytoplasmic" evidence="1">
    <location>
        <begin position="1"/>
        <end position="5"/>
    </location>
</feature>
<feature type="transmembrane region" description="Helical" evidence="1">
    <location>
        <begin position="6"/>
        <end position="26"/>
    </location>
</feature>
<feature type="topological domain" description="Lumenal" evidence="1">
    <location>
        <begin position="27"/>
        <end position="449"/>
    </location>
</feature>
<feature type="transmembrane region" description="Helical" evidence="1">
    <location>
        <begin position="450"/>
        <end position="470"/>
    </location>
</feature>
<feature type="topological domain" description="Cytoplasmic" evidence="1">
    <location>
        <begin position="471"/>
        <end position="483"/>
    </location>
</feature>
<feature type="transmembrane region" description="Helical" evidence="1">
    <location>
        <begin position="484"/>
        <end position="503"/>
    </location>
</feature>
<feature type="topological domain" description="Lumenal" evidence="1">
    <location>
        <begin position="504"/>
        <end position="509"/>
    </location>
</feature>
<feature type="transmembrane region" description="Helical" evidence="1">
    <location>
        <begin position="510"/>
        <end position="530"/>
    </location>
</feature>
<feature type="topological domain" description="Cytoplasmic" evidence="1">
    <location>
        <begin position="531"/>
        <end position="547"/>
    </location>
</feature>
<feature type="transmembrane region" description="Helical" evidence="1">
    <location>
        <begin position="548"/>
        <end position="568"/>
    </location>
</feature>
<feature type="topological domain" description="Lumenal" evidence="1">
    <location>
        <begin position="569"/>
        <end position="576"/>
    </location>
</feature>
<feature type="transmembrane region" description="Helical" evidence="1">
    <location>
        <begin position="577"/>
        <end position="597"/>
    </location>
</feature>
<feature type="topological domain" description="Cytoplasmic" evidence="1">
    <location>
        <begin position="598"/>
        <end position="600"/>
    </location>
</feature>
<feature type="transmembrane region" description="Helical" evidence="1">
    <location>
        <begin position="601"/>
        <end position="621"/>
    </location>
</feature>
<feature type="topological domain" description="Lumenal" evidence="1">
    <location>
        <begin position="622"/>
        <end position="626"/>
    </location>
</feature>
<feature type="transmembrane region" description="Helical" evidence="1">
    <location>
        <begin position="627"/>
        <end position="647"/>
    </location>
</feature>
<feature type="topological domain" description="Cytoplasmic" evidence="1">
    <location>
        <begin position="648"/>
        <end position="663"/>
    </location>
</feature>
<feature type="transmembrane region" description="Helical" evidence="1">
    <location>
        <begin position="664"/>
        <end position="684"/>
    </location>
</feature>
<feature type="topological domain" description="Lumenal" evidence="1">
    <location>
        <begin position="685"/>
        <end position="688"/>
    </location>
</feature>
<feature type="transmembrane region" description="Helical" evidence="1">
    <location>
        <begin position="689"/>
        <end position="709"/>
    </location>
</feature>
<feature type="topological domain" description="Cytoplasmic" evidence="1">
    <location>
        <begin position="710"/>
        <end position="737"/>
    </location>
</feature>
<feature type="transmembrane region" description="Helical" evidence="1">
    <location>
        <begin position="738"/>
        <end position="758"/>
    </location>
</feature>
<feature type="topological domain" description="Lumenal" evidence="1">
    <location>
        <begin position="759"/>
        <end position="792"/>
    </location>
</feature>
<feature type="transmembrane region" description="Helical" evidence="1">
    <location>
        <begin position="793"/>
        <end position="813"/>
    </location>
</feature>
<feature type="topological domain" description="Cytoplasmic" evidence="1">
    <location>
        <begin position="814"/>
        <end position="835"/>
    </location>
</feature>
<feature type="transmembrane region" description="Helical" evidence="1">
    <location>
        <begin position="836"/>
        <end position="856"/>
    </location>
</feature>
<feature type="topological domain" description="Lumenal" evidence="1">
    <location>
        <begin position="857"/>
        <end position="865"/>
    </location>
</feature>
<feature type="transmembrane region" description="Helical" evidence="1">
    <location>
        <begin position="866"/>
        <end position="886"/>
    </location>
</feature>
<feature type="topological domain" description="Cytoplasmic" evidence="1">
    <location>
        <begin position="887"/>
        <end position="894"/>
    </location>
</feature>
<feature type="transmembrane region" description="Helical" evidence="1">
    <location>
        <begin position="895"/>
        <end position="915"/>
    </location>
</feature>
<feature type="topological domain" description="Lumenal" evidence="1">
    <location>
        <begin position="916"/>
        <end position="935"/>
    </location>
</feature>
<feature type="glycosylation site" description="N-linked (GlcNAc...) asparagine" evidence="1">
    <location>
        <position position="86"/>
    </location>
</feature>
<feature type="glycosylation site" description="N-linked (GlcNAc...) asparagine" evidence="1">
    <location>
        <position position="134"/>
    </location>
</feature>
<feature type="glycosylation site" description="N-linked (GlcNAc...) asparagine" evidence="1">
    <location>
        <position position="315"/>
    </location>
</feature>
<feature type="glycosylation site" description="N-linked (GlcNAc...) asparagine" evidence="1">
    <location>
        <position position="398"/>
    </location>
</feature>
<feature type="glycosylation site" description="N-linked (GlcNAc...) asparagine" evidence="1">
    <location>
        <position position="925"/>
    </location>
</feature>
<feature type="mutagenesis site" description="In its8-1; confers sensitivity to calcineurin inhibitor FK506." evidence="3">
    <original>P</original>
    <variation>S</variation>
    <location>
        <position position="288"/>
    </location>
</feature>